<comment type="function">
    <text evidence="4">A component of desmosome cell-cell junctions which are required for positive regulation of cellular adhesion (PubMed:11714727). Required for desmosome adhesion strength between the granular layers of the epidermis, as a result moderates epidermal proliferation and differentiation (PubMed:11714727). Is therefore required to maintain postnatal epidermal barrier function and normal hair follicle morphology into adulthood (PubMed:11714727).</text>
</comment>
<comment type="subunit">
    <text evidence="1">Binds to JUP/plakoglobin.</text>
</comment>
<comment type="subcellular location">
    <subcellularLocation>
        <location evidence="1">Cell membrane</location>
        <topology evidence="2">Single-pass type I membrane protein</topology>
    </subcellularLocation>
    <subcellularLocation>
        <location evidence="4 6">Cell junction</location>
        <location evidence="4 6">Desmosome</location>
    </subcellularLocation>
</comment>
<comment type="alternative products">
    <event type="alternative splicing"/>
    <isoform>
        <id>P55849-1</id>
        <name>1A</name>
        <sequence type="displayed"/>
    </isoform>
    <isoform>
        <id>P55849-2</id>
        <name>1B</name>
        <sequence type="described" ref="VSP_000653 VSP_000654"/>
    </isoform>
</comment>
<comment type="tissue specificity">
    <text evidence="4">Expressed in the epidermis and inner root sheaths of hair follicles (at protein level).</text>
</comment>
<comment type="developmental stage">
    <text evidence="7">Expressed in the epithelium close to the developing external nare at 13.5 dpc (PubMed:8823356). Expressed in whisker follicles of the tactile vibrissae above the eye and on the upper lip, also weakly expressed in the ventral epidermis at 14.5 dpc (PubMed:8823356). Expression increases at 15.5 dpc and is strongly evident in whisker follicles on the face and in deep hair follicles of the stratifying epidermis (PubMed:8823356). Expressed in outer cell layers of the upper hair bulb and into the keratinizing cells of the inner root sheath, also expressed in the superficial cell layers over the proximal half of the nail bed starting within the nail fold at 16.5 dpc (PubMed:8823356).</text>
</comment>
<comment type="domain">
    <text evidence="9">Calcium may be bound by the cadherin-like repeats.</text>
</comment>
<comment type="disruption phenotype">
    <text evidence="4">Knockout mice are fertile and born at the expected Mendelian rate (PubMed:11714727). As a result of eyelid fusion failure 10% of pups are born with one or both eyes open leading to corneal damage, inflammation and corneal opacity or micropthalmia later in life. Skin is flaking and scaly at 2 days of age (PubMed:11714727). Mice grow slower than wild type litter mates and are 30% smaller at weaning (21 days of age), however at 3 months of age they have caught up and are indistinguishable by weight and size (PubMed:11714727). Thicker epidermis at all body sites with additional layers, principally in the spinous layer at 2 days of age (PubMed:11714727). Localized hyperkeratosis and parakeratosis are also evident with increased cell proliferation, particularly in suprabasal layers (PubMed:11714727). Increase in expression of hyperproliferation marker Krt6a in interfollicular epidermis, however this increase is locally patchy (PubMed:11714727). Krt16 expression is up-regulated and detected in all cell layers of the interfollicular epidermis (PubMed:11714727). Adult mice are prone to skin ulceration, expression of Krt6a and Krt16 is increased throughout these lesions (PubMed:11714727). Increase in skin fragility, acantholysis within the granular layer between the granular and spinous layers or between cornified and granular layers (PubMed:11714727). Increase in transepidermal water loss as a result of a decrease in epidermal desmosome adhesive strength (PubMed:11714727). Adult mice suffer patchy hair loss and skin ulceration beginning between 1 and 2 months of age, this is caused by an absence of normal hair follicles that are replaced by utriculi and cysts (PubMed:11714727).</text>
</comment>
<evidence type="ECO:0000250" key="1">
    <source>
        <dbReference type="UniProtKB" id="Q08554"/>
    </source>
</evidence>
<evidence type="ECO:0000255" key="2"/>
<evidence type="ECO:0000255" key="3">
    <source>
        <dbReference type="PROSITE-ProRule" id="PRU00043"/>
    </source>
</evidence>
<evidence type="ECO:0000269" key="4">
    <source>
    </source>
</evidence>
<evidence type="ECO:0000269" key="5">
    <source>
    </source>
</evidence>
<evidence type="ECO:0000269" key="6">
    <source>
    </source>
</evidence>
<evidence type="ECO:0000269" key="7">
    <source>
    </source>
</evidence>
<evidence type="ECO:0000303" key="8">
    <source>
    </source>
</evidence>
<evidence type="ECO:0000305" key="9"/>
<proteinExistence type="evidence at protein level"/>
<keyword id="KW-0025">Alternative splicing</keyword>
<keyword id="KW-0106">Calcium</keyword>
<keyword id="KW-0130">Cell adhesion</keyword>
<keyword id="KW-0965">Cell junction</keyword>
<keyword id="KW-1003">Cell membrane</keyword>
<keyword id="KW-0165">Cleavage on pair of basic residues</keyword>
<keyword id="KW-0325">Glycoprotein</keyword>
<keyword id="KW-0472">Membrane</keyword>
<keyword id="KW-0597">Phosphoprotein</keyword>
<keyword id="KW-1185">Reference proteome</keyword>
<keyword id="KW-0677">Repeat</keyword>
<keyword id="KW-0732">Signal</keyword>
<keyword id="KW-0812">Transmembrane</keyword>
<keyword id="KW-1133">Transmembrane helix</keyword>
<gene>
    <name type="primary">Dsc1</name>
</gene>
<organism>
    <name type="scientific">Mus musculus</name>
    <name type="common">Mouse</name>
    <dbReference type="NCBI Taxonomy" id="10090"/>
    <lineage>
        <taxon>Eukaryota</taxon>
        <taxon>Metazoa</taxon>
        <taxon>Chordata</taxon>
        <taxon>Craniata</taxon>
        <taxon>Vertebrata</taxon>
        <taxon>Euteleostomi</taxon>
        <taxon>Mammalia</taxon>
        <taxon>Eutheria</taxon>
        <taxon>Euarchontoglires</taxon>
        <taxon>Glires</taxon>
        <taxon>Rodentia</taxon>
        <taxon>Myomorpha</taxon>
        <taxon>Muroidea</taxon>
        <taxon>Muridae</taxon>
        <taxon>Murinae</taxon>
        <taxon>Mus</taxon>
        <taxon>Mus</taxon>
    </lineage>
</organism>
<feature type="signal peptide" evidence="2">
    <location>
        <begin position="1"/>
        <end position="29"/>
    </location>
</feature>
<feature type="propeptide" id="PRO_0000003865" evidence="2">
    <location>
        <begin position="30"/>
        <end position="134"/>
    </location>
</feature>
<feature type="chain" id="PRO_0000003866" description="Desmocollin-1">
    <location>
        <begin position="135"/>
        <end position="886"/>
    </location>
</feature>
<feature type="topological domain" description="Extracellular" evidence="2">
    <location>
        <begin position="135"/>
        <end position="691"/>
    </location>
</feature>
<feature type="transmembrane region" description="Helical" evidence="2">
    <location>
        <begin position="692"/>
        <end position="714"/>
    </location>
</feature>
<feature type="topological domain" description="Cytoplasmic" evidence="2">
    <location>
        <begin position="715"/>
        <end position="886"/>
    </location>
</feature>
<feature type="domain" description="Cadherin 1" evidence="3">
    <location>
        <begin position="135"/>
        <end position="242"/>
    </location>
</feature>
<feature type="domain" description="Cadherin 2" evidence="3">
    <location>
        <begin position="243"/>
        <end position="354"/>
    </location>
</feature>
<feature type="domain" description="Cadherin 3" evidence="3">
    <location>
        <begin position="355"/>
        <end position="471"/>
    </location>
</feature>
<feature type="domain" description="Cadherin 4" evidence="3">
    <location>
        <begin position="472"/>
        <end position="575"/>
    </location>
</feature>
<feature type="domain" description="Cadherin 5" evidence="3">
    <location>
        <begin position="576"/>
        <end position="682"/>
    </location>
</feature>
<feature type="modified residue" description="Phosphothreonine" evidence="1">
    <location>
        <position position="385"/>
    </location>
</feature>
<feature type="glycosylation site" description="N-linked (GlcNAc...) asparagine" evidence="2">
    <location>
        <position position="130"/>
    </location>
</feature>
<feature type="glycosylation site" description="N-linked (GlcNAc...) asparagine" evidence="2">
    <location>
        <position position="165"/>
    </location>
</feature>
<feature type="glycosylation site" description="N-linked (GlcNAc...) (high mannose) asparagine" evidence="5">
    <location>
        <position position="546"/>
    </location>
</feature>
<feature type="glycosylation site" description="N-linked (GlcNAc...) asparagine" evidence="2">
    <location>
        <position position="613"/>
    </location>
</feature>
<feature type="splice variant" id="VSP_000653" description="In isoform 1B." evidence="8">
    <original>KVYLCGQAEEH</original>
    <variation>ESIRGHTLIKN</variation>
    <location>
        <begin position="822"/>
        <end position="832"/>
    </location>
</feature>
<feature type="splice variant" id="VSP_000654" description="In isoform 1B." evidence="8">
    <location>
        <begin position="840"/>
        <end position="886"/>
    </location>
</feature>
<feature type="sequence conflict" description="In Ref. 1; CAA66628/CAA66629." evidence="9" ref="1">
    <original>V</original>
    <variation>D</variation>
    <location>
        <position position="177"/>
    </location>
</feature>
<accession>P55849</accession>
<accession>E9QJX2</accession>
<reference key="1">
    <citation type="journal article" date="1996" name="J. Invest. Dermatol.">
        <title>Expression of the 'skin-type' desmosomal cadherin DSC1 is closely linked to the keratinization of epithelial tissues during mouse development.</title>
        <authorList>
            <person name="King I.A."/>
            <person name="O'Brien T.J."/>
            <person name="Buxton R.S."/>
        </authorList>
    </citation>
    <scope>NUCLEOTIDE SEQUENCE [MRNA] (ISOFORMS 1A AND 1B)</scope>
    <scope>DEVELOPMENTAL STAGE</scope>
    <source>
        <strain>C57BL/6J</strain>
        <tissue>Skin</tissue>
    </source>
</reference>
<reference key="2">
    <citation type="journal article" date="2009" name="PLoS Biol.">
        <title>Lineage-specific biology revealed by a finished genome assembly of the mouse.</title>
        <authorList>
            <person name="Church D.M."/>
            <person name="Goodstadt L."/>
            <person name="Hillier L.W."/>
            <person name="Zody M.C."/>
            <person name="Goldstein S."/>
            <person name="She X."/>
            <person name="Bult C.J."/>
            <person name="Agarwala R."/>
            <person name="Cherry J.L."/>
            <person name="DiCuccio M."/>
            <person name="Hlavina W."/>
            <person name="Kapustin Y."/>
            <person name="Meric P."/>
            <person name="Maglott D."/>
            <person name="Birtle Z."/>
            <person name="Marques A.C."/>
            <person name="Graves T."/>
            <person name="Zhou S."/>
            <person name="Teague B."/>
            <person name="Potamousis K."/>
            <person name="Churas C."/>
            <person name="Place M."/>
            <person name="Herschleb J."/>
            <person name="Runnheim R."/>
            <person name="Forrest D."/>
            <person name="Amos-Landgraf J."/>
            <person name="Schwartz D.C."/>
            <person name="Cheng Z."/>
            <person name="Lindblad-Toh K."/>
            <person name="Eichler E.E."/>
            <person name="Ponting C.P."/>
        </authorList>
    </citation>
    <scope>NUCLEOTIDE SEQUENCE [LARGE SCALE GENOMIC DNA]</scope>
    <source>
        <strain>C57BL/6J</strain>
    </source>
</reference>
<reference key="3">
    <citation type="journal article" date="2001" name="J. Cell Biol.">
        <title>Mice lacking desmocollin 1 show epidermal fragility accompanied by barrier defects and abnormal differentiation.</title>
        <authorList>
            <person name="Chidgey M."/>
            <person name="Brakebusch C."/>
            <person name="Gustafsson E."/>
            <person name="Cruchley A."/>
            <person name="Hail C."/>
            <person name="Kirk S."/>
            <person name="Merritt A."/>
            <person name="North A."/>
            <person name="Tselepis C."/>
            <person name="Hewitt J."/>
            <person name="Byrne C."/>
            <person name="Fassler R."/>
            <person name="Garrod D."/>
        </authorList>
    </citation>
    <scope>FUNCTION</scope>
    <scope>SUBCELLULAR LOCATION</scope>
    <scope>TISSUE SPECIFICITY</scope>
    <scope>DISRUPTION PHENOTYPE</scope>
</reference>
<reference key="4">
    <citation type="journal article" date="2005" name="Mol. Cell. Proteomics">
        <title>High throughput quantitative glycomics and glycoform-focused proteomics of murine dermis and epidermis.</title>
        <authorList>
            <person name="Uematsu R."/>
            <person name="Furukawa J."/>
            <person name="Nakagawa H."/>
            <person name="Shinohara Y."/>
            <person name="Deguchi K."/>
            <person name="Monde K."/>
            <person name="Nishimura S."/>
        </authorList>
    </citation>
    <scope>GLYCOSYLATION [LARGE SCALE ANALYSIS] AT ASN-546</scope>
    <source>
        <tissue>Epidermis</tissue>
    </source>
</reference>
<reference key="5">
    <citation type="journal article" date="2024" name="Kidney Int.">
        <title>The role of desmoglein-2 in kidney disease.</title>
        <authorList>
            <person name="Xu T."/>
            <person name="Herkens L."/>
            <person name="Jia T."/>
            <person name="Klinkhammer B.M."/>
            <person name="Kant S."/>
            <person name="Krusche C.A."/>
            <person name="Buhl E.M."/>
            <person name="Hayat S."/>
            <person name="Floege J."/>
            <person name="Strnad P."/>
            <person name="Kramann R."/>
            <person name="Djudjaj S."/>
            <person name="Boor P."/>
        </authorList>
    </citation>
    <scope>SUBCELLULAR LOCATION</scope>
</reference>
<name>DSC1_MOUSE</name>
<protein>
    <recommendedName>
        <fullName>Desmocollin-1</fullName>
    </recommendedName>
</protein>
<sequence>MAVACAAPGSTFSKQLLFFLLVLVLFCDACQKVSLHVPSHLKAETPVGKVNLEECLKSPSLILSSDPAFRILEDGTIYTTHDLLLSSEKRGFSILLSDGQGQEQKKLEVVLSAREKKVFRKRHTKEPVHNRSKRRWAPIPCSLMENSLGPFPQHIQQIQSDAAQNYTIFYSISGPGVDKEPYNLFYIEKDTGDIYCTRSIDREQYDQFLVYGYATTADGYAPDYPLPLLFKVEDDNDNAPYFETKLTVFSVPENCRSGTSVGQVTAIDKDEPGTLHTRLKYKILQQIPDQPKHFSIHPDTGVITTTTPLLDREKCDTYKLVMEVRDMGGQPFGLFTTGTITISLEDENDNSPYFTQTSYTTEVEENRIDVEILRMVVHDQDLPNTPHSKAVYTILKGNENGNFKITTDPNTNEGVLCVVKPLNYEVSRQVTLQIGVLNEAQFTNAANAQPPTMCTTTVTVKIKDRDEGPECQPPVKVIQSKDGLPAGQELLGYKAVDPETSSGEGLRYEMVGDEDNWFEINKITGDLRTVKVLDRESKFVKNNQYNISVVATDTAGRSCTGTLVVLLEDFNDHPPQIDKEVTICQQEKDFAVLEPIDLDGPDNGPPFQFLLDNSSSKLWTLESQDGKRAILRQRHNLNYNYYSVPIQIQDRHGFSAKHVLSVRVCDCTTPTECRMAVKEERDAKPNIILGKWAILAMVLGSALLLCILFTCFCVTTTKRTVKKCFPDDVAQQNLIVSNTEGPGEEVTEANIRLPTQTANICDTSMSVGTLGGQGIKTQQSFEMVKGGHTLESHKGGVLGAAEPGRYAYTDWQTFTQPRLGEKVYLCGQAEEHKHCEDYVRPYNYEGKGSMAGSVGCCSDRQEEEGLEFLDQLEPKFRTLAKTCVKK</sequence>
<dbReference type="EMBL" id="X97986">
    <property type="protein sequence ID" value="CAA66628.1"/>
    <property type="molecule type" value="mRNA"/>
</dbReference>
<dbReference type="EMBL" id="X97986">
    <property type="protein sequence ID" value="CAA66629.1"/>
    <property type="molecule type" value="mRNA"/>
</dbReference>
<dbReference type="EMBL" id="AC132314">
    <property type="status" value="NOT_ANNOTATED_CDS"/>
    <property type="molecule type" value="Genomic_DNA"/>
</dbReference>
<dbReference type="CCDS" id="CCDS89198.1">
    <molecule id="P55849-1"/>
</dbReference>
<dbReference type="RefSeq" id="NP_001278733.1">
    <molecule id="P55849-1"/>
    <property type="nucleotide sequence ID" value="NM_001291804.1"/>
</dbReference>
<dbReference type="SMR" id="P55849"/>
<dbReference type="BioGRID" id="199318">
    <property type="interactions" value="8"/>
</dbReference>
<dbReference type="FunCoup" id="P55849">
    <property type="interactions" value="93"/>
</dbReference>
<dbReference type="STRING" id="10090.ENSMUSP00000042303"/>
<dbReference type="GlyCosmos" id="P55849">
    <property type="glycosylation" value="4 sites, No reported glycans"/>
</dbReference>
<dbReference type="GlyGen" id="P55849">
    <property type="glycosylation" value="4 sites"/>
</dbReference>
<dbReference type="iPTMnet" id="P55849"/>
<dbReference type="PhosphoSitePlus" id="P55849"/>
<dbReference type="PaxDb" id="10090-ENSMUSP00000042303"/>
<dbReference type="PeptideAtlas" id="P55849"/>
<dbReference type="ProteomicsDB" id="275403">
    <molecule id="P55849-1"/>
</dbReference>
<dbReference type="ProteomicsDB" id="275404">
    <molecule id="P55849-2"/>
</dbReference>
<dbReference type="Antibodypedia" id="2439">
    <property type="antibodies" value="229 antibodies from 28 providers"/>
</dbReference>
<dbReference type="DNASU" id="13505"/>
<dbReference type="Ensembl" id="ENSMUST00000224432.2">
    <molecule id="P55849-1"/>
    <property type="protein sequence ID" value="ENSMUSP00000153639.2"/>
    <property type="gene ID" value="ENSMUSG00000044322.8"/>
</dbReference>
<dbReference type="GeneID" id="13505"/>
<dbReference type="KEGG" id="mmu:13505"/>
<dbReference type="UCSC" id="uc008eeh.3">
    <molecule id="P55849-1"/>
    <property type="organism name" value="mouse"/>
</dbReference>
<dbReference type="AGR" id="MGI:109173"/>
<dbReference type="CTD" id="1823"/>
<dbReference type="MGI" id="MGI:109173">
    <property type="gene designation" value="Dsc1"/>
</dbReference>
<dbReference type="VEuPathDB" id="HostDB:ENSMUSG00000044322"/>
<dbReference type="eggNOG" id="KOG3594">
    <property type="taxonomic scope" value="Eukaryota"/>
</dbReference>
<dbReference type="GeneTree" id="ENSGT01030000234624"/>
<dbReference type="InParanoid" id="P55849"/>
<dbReference type="OMA" id="VTICRHE"/>
<dbReference type="OrthoDB" id="6079678at2759"/>
<dbReference type="Reactome" id="R-MMU-6798695">
    <property type="pathway name" value="Neutrophil degranulation"/>
</dbReference>
<dbReference type="Reactome" id="R-MMU-6805567">
    <property type="pathway name" value="Keratinization"/>
</dbReference>
<dbReference type="Reactome" id="R-MMU-6809371">
    <property type="pathway name" value="Formation of the cornified envelope"/>
</dbReference>
<dbReference type="BioGRID-ORCS" id="13505">
    <property type="hits" value="2 hits in 76 CRISPR screens"/>
</dbReference>
<dbReference type="PRO" id="PR:P55849"/>
<dbReference type="Proteomes" id="UP000000589">
    <property type="component" value="Chromosome 18"/>
</dbReference>
<dbReference type="RNAct" id="P55849">
    <property type="molecule type" value="protein"/>
</dbReference>
<dbReference type="Bgee" id="ENSMUSG00000044322">
    <property type="expression patterns" value="Expressed in tail skin and 46 other cell types or tissues"/>
</dbReference>
<dbReference type="ExpressionAtlas" id="P55849">
    <property type="expression patterns" value="baseline and differential"/>
</dbReference>
<dbReference type="GO" id="GO:0030057">
    <property type="term" value="C:desmosome"/>
    <property type="evidence" value="ECO:0000314"/>
    <property type="project" value="UniProtKB"/>
</dbReference>
<dbReference type="GO" id="GO:0005886">
    <property type="term" value="C:plasma membrane"/>
    <property type="evidence" value="ECO:0007669"/>
    <property type="project" value="UniProtKB-SubCell"/>
</dbReference>
<dbReference type="GO" id="GO:0005509">
    <property type="term" value="F:calcium ion binding"/>
    <property type="evidence" value="ECO:0007669"/>
    <property type="project" value="InterPro"/>
</dbReference>
<dbReference type="GO" id="GO:0002160">
    <property type="term" value="P:desmosome maintenance"/>
    <property type="evidence" value="ECO:0000315"/>
    <property type="project" value="UniProtKB"/>
</dbReference>
<dbReference type="GO" id="GO:0061436">
    <property type="term" value="P:establishment of skin barrier"/>
    <property type="evidence" value="ECO:0000315"/>
    <property type="project" value="UniProtKB"/>
</dbReference>
<dbReference type="GO" id="GO:0031069">
    <property type="term" value="P:hair follicle morphogenesis"/>
    <property type="evidence" value="ECO:0000315"/>
    <property type="project" value="UniProtKB"/>
</dbReference>
<dbReference type="GO" id="GO:0007156">
    <property type="term" value="P:homophilic cell adhesion via plasma membrane adhesion molecules"/>
    <property type="evidence" value="ECO:0007669"/>
    <property type="project" value="InterPro"/>
</dbReference>
<dbReference type="GO" id="GO:0050680">
    <property type="term" value="P:negative regulation of epithelial cell proliferation"/>
    <property type="evidence" value="ECO:0000315"/>
    <property type="project" value="UniProtKB"/>
</dbReference>
<dbReference type="CDD" id="cd11304">
    <property type="entry name" value="Cadherin_repeat"/>
    <property type="match status" value="4"/>
</dbReference>
<dbReference type="FunFam" id="2.60.40.60:FF:000011">
    <property type="entry name" value="Cadherin 1"/>
    <property type="match status" value="1"/>
</dbReference>
<dbReference type="FunFam" id="2.60.40.60:FF:000019">
    <property type="entry name" value="Cadherin 2"/>
    <property type="match status" value="1"/>
</dbReference>
<dbReference type="FunFam" id="2.60.40.60:FF:000027">
    <property type="entry name" value="Cadherin 2"/>
    <property type="match status" value="1"/>
</dbReference>
<dbReference type="FunFam" id="2.60.40.60:FF:000031">
    <property type="entry name" value="Cadherin 3"/>
    <property type="match status" value="1"/>
</dbReference>
<dbReference type="FunFam" id="2.60.40.60:FF:000091">
    <property type="entry name" value="Desmocollin 1"/>
    <property type="match status" value="1"/>
</dbReference>
<dbReference type="FunFam" id="2.60.40.60:FF:000096">
    <property type="entry name" value="Desmocollin 2"/>
    <property type="match status" value="1"/>
</dbReference>
<dbReference type="FunFam" id="4.10.900.10:FF:000005">
    <property type="entry name" value="Desmocollin 2"/>
    <property type="match status" value="1"/>
</dbReference>
<dbReference type="Gene3D" id="2.60.40.60">
    <property type="entry name" value="Cadherins"/>
    <property type="match status" value="6"/>
</dbReference>
<dbReference type="Gene3D" id="4.10.900.10">
    <property type="entry name" value="TCF3-CBD (Catenin binding domain)"/>
    <property type="match status" value="1"/>
</dbReference>
<dbReference type="InterPro" id="IPR050971">
    <property type="entry name" value="Cadherin-domain_protein"/>
</dbReference>
<dbReference type="InterPro" id="IPR002126">
    <property type="entry name" value="Cadherin-like_dom"/>
</dbReference>
<dbReference type="InterPro" id="IPR015919">
    <property type="entry name" value="Cadherin-like_sf"/>
</dbReference>
<dbReference type="InterPro" id="IPR020894">
    <property type="entry name" value="Cadherin_CS"/>
</dbReference>
<dbReference type="InterPro" id="IPR014868">
    <property type="entry name" value="Cadherin_pro_dom"/>
</dbReference>
<dbReference type="InterPro" id="IPR000233">
    <property type="entry name" value="Cadherin_Y-type_LIR"/>
</dbReference>
<dbReference type="InterPro" id="IPR027397">
    <property type="entry name" value="Catenin-bd_sf"/>
</dbReference>
<dbReference type="InterPro" id="IPR009122">
    <property type="entry name" value="Desmosomal_cadherin"/>
</dbReference>
<dbReference type="PANTHER" id="PTHR24025:SF8">
    <property type="entry name" value="DESMOCOLLIN-1"/>
    <property type="match status" value="1"/>
</dbReference>
<dbReference type="PANTHER" id="PTHR24025">
    <property type="entry name" value="DESMOGLEIN FAMILY MEMBER"/>
    <property type="match status" value="1"/>
</dbReference>
<dbReference type="Pfam" id="PF01049">
    <property type="entry name" value="CADH_Y-type_LIR"/>
    <property type="match status" value="1"/>
</dbReference>
<dbReference type="Pfam" id="PF00028">
    <property type="entry name" value="Cadherin"/>
    <property type="match status" value="4"/>
</dbReference>
<dbReference type="Pfam" id="PF08758">
    <property type="entry name" value="Cadherin_pro"/>
    <property type="match status" value="1"/>
</dbReference>
<dbReference type="PRINTS" id="PR00205">
    <property type="entry name" value="CADHERIN"/>
</dbReference>
<dbReference type="PRINTS" id="PR01818">
    <property type="entry name" value="DESMOCADHERN"/>
</dbReference>
<dbReference type="PRINTS" id="PR01820">
    <property type="entry name" value="DESMOCOLLIN"/>
</dbReference>
<dbReference type="SMART" id="SM00112">
    <property type="entry name" value="CA"/>
    <property type="match status" value="4"/>
</dbReference>
<dbReference type="SMART" id="SM01055">
    <property type="entry name" value="Cadherin_pro"/>
    <property type="match status" value="1"/>
</dbReference>
<dbReference type="SUPFAM" id="SSF49313">
    <property type="entry name" value="Cadherin-like"/>
    <property type="match status" value="6"/>
</dbReference>
<dbReference type="PROSITE" id="PS00232">
    <property type="entry name" value="CADHERIN_1"/>
    <property type="match status" value="2"/>
</dbReference>
<dbReference type="PROSITE" id="PS50268">
    <property type="entry name" value="CADHERIN_2"/>
    <property type="match status" value="4"/>
</dbReference>